<evidence type="ECO:0000250" key="1"/>
<evidence type="ECO:0000305" key="2"/>
<accession>O67125</accession>
<feature type="chain" id="PRO_0000103308" description="DNA polymerase III subunit alpha">
    <location>
        <begin position="1"/>
        <end position="1161"/>
    </location>
</feature>
<organism>
    <name type="scientific">Aquifex aeolicus (strain VF5)</name>
    <dbReference type="NCBI Taxonomy" id="224324"/>
    <lineage>
        <taxon>Bacteria</taxon>
        <taxon>Pseudomonadati</taxon>
        <taxon>Aquificota</taxon>
        <taxon>Aquificia</taxon>
        <taxon>Aquificales</taxon>
        <taxon>Aquificaceae</taxon>
        <taxon>Aquifex</taxon>
    </lineage>
</organism>
<proteinExistence type="inferred from homology"/>
<keyword id="KW-0963">Cytoplasm</keyword>
<keyword id="KW-0235">DNA replication</keyword>
<keyword id="KW-0239">DNA-directed DNA polymerase</keyword>
<keyword id="KW-0548">Nucleotidyltransferase</keyword>
<keyword id="KW-1185">Reference proteome</keyword>
<keyword id="KW-0808">Transferase</keyword>
<reference key="1">
    <citation type="journal article" date="1998" name="Nature">
        <title>The complete genome of the hyperthermophilic bacterium Aquifex aeolicus.</title>
        <authorList>
            <person name="Deckert G."/>
            <person name="Warren P.V."/>
            <person name="Gaasterland T."/>
            <person name="Young W.G."/>
            <person name="Lenox A.L."/>
            <person name="Graham D.E."/>
            <person name="Overbeek R."/>
            <person name="Snead M.A."/>
            <person name="Keller M."/>
            <person name="Aujay M."/>
            <person name="Huber R."/>
            <person name="Feldman R.A."/>
            <person name="Short J.M."/>
            <person name="Olsen G.J."/>
            <person name="Swanson R.V."/>
        </authorList>
    </citation>
    <scope>NUCLEOTIDE SEQUENCE [LARGE SCALE GENOMIC DNA]</scope>
    <source>
        <strain>VF5</strain>
    </source>
</reference>
<gene>
    <name type="primary">dnaE</name>
    <name type="ordered locus">aq_1008</name>
</gene>
<comment type="function">
    <text evidence="1">DNA polymerase III is a complex, multichain enzyme responsible for most of the replicative synthesis in bacteria. This DNA polymerase also exhibits 3' to 5' exonuclease activity. The alpha chain is the DNA polymerase (By similarity).</text>
</comment>
<comment type="catalytic activity">
    <reaction>
        <text>DNA(n) + a 2'-deoxyribonucleoside 5'-triphosphate = DNA(n+1) + diphosphate</text>
        <dbReference type="Rhea" id="RHEA:22508"/>
        <dbReference type="Rhea" id="RHEA-COMP:17339"/>
        <dbReference type="Rhea" id="RHEA-COMP:17340"/>
        <dbReference type="ChEBI" id="CHEBI:33019"/>
        <dbReference type="ChEBI" id="CHEBI:61560"/>
        <dbReference type="ChEBI" id="CHEBI:173112"/>
        <dbReference type="EC" id="2.7.7.7"/>
    </reaction>
</comment>
<comment type="subunit">
    <text evidence="1">DNA polymerase III contains a core (composed of alpha, epsilon and theta chains) that associates with a tau subunit. This core dimerizes to form the PolIII' complex. PolIII' associates with the gamma complex (composed of gamma, delta, delta', psi and chi chains) and with the beta chain to form the complete DNA polymerase III complex (By similarity).</text>
</comment>
<comment type="subcellular location">
    <subcellularLocation>
        <location evidence="1">Cytoplasm</location>
    </subcellularLocation>
</comment>
<comment type="similarity">
    <text evidence="2">Belongs to the DNA polymerase type-C family. DnaE subfamily.</text>
</comment>
<protein>
    <recommendedName>
        <fullName>DNA polymerase III subunit alpha</fullName>
        <ecNumber>2.7.7.7</ecNumber>
    </recommendedName>
</protein>
<name>DPO3A_AQUAE</name>
<sequence>MSKDFVHLHLHTQFSLLDGAIKIDELVKKAKEYGYKAVGMSDHGNLFGSYKFYKALKAEGIKPIIGMEAYFTTGSRFDRKTKTSEDNITDKYNHHLILIAKDDKGLKNLMKLSTLAYKEGFYYKPRIDYELLEKYGEGLIALTACLKGVPTYYASINEVKKAEEWVKKFKDIFGDDLYLELQANNIPEQEVANRNLIEIAKKYDVKLIATQDAHYLNPEDRYAHTVLMALQMKKTIHELSSGNFKCSNEDLHFAPPEYMWKKFEGKFEGWEKALLNTLEVMEKTADSFEIFENSTYLLPKYDVPPDKTLEEYLRELAYKGLRQRIERGQAKDTKEYWERLEYELEVINKMGFAGYFLIVQDFINWAKKNDIPVGPGRGSAGGSLVAYAIGITDVDPIKHGFLFERFLNPERVSMPDIDVDFCQDNREKVIEYVRNKYGHDNVAQIITYNVMKAKQTLRDVARAMGLPYSTADKLAKLIPQGDVQGTWLSLEEMYKTPVEELLQKYGEHRTDIEDNVKKFRQICEESPEIKQLVETALKLEGLTRHTSLHAAGVVIAPKPLSELVPLYYDKEGEVATQYDMVQLEELGLLKMDFLGLKTLTELKLMKELIKERHGVDINFLELPLDDPKVYKLLQEGKTTGVFQLESRGMKELLKKLKPDSFDDIVAVLALYRPGPLKSGLVDTYIKRKHGKEPVEYPFPELEPVLKETYGVIVYQEQVMKMSQILSGFTPGEADTLRKAIGKKKADLMAQMKDKFIQGAVERGYPEEKIRKLWEDIEKFASYSFNKSHSVAYGYISYWTAYVKAHYPAEFFAVKLTTEKNDNKFLNLIKDAKLFGFEILPPDINKSDVGFTIEGENRIRFGLARIKGVGEETAKIIVEARKKYKQFKGLADFINKTKNRKINKKVVEALVKAGAFDFTKKKRKELLAKVANSEKALMATQNSLFGAPKEEVEELDPLKLEKEVLGFYISGHPLDNYEKLLKNRYTPIEDLEEWDKESEAVLTGVITELKVKKTKNGDYMAVFNLVDKTGLIECVVFPGVYEEAKELIEEDRVVVVKGFLDEDLETENVKFVVKEVFSPEEFAKEMRNTLYIFLKREQALNGVAEKLKGIIENNRTEDGYNLVLTVDLGDYFVDLALPQDMKLKADRKVVEEIEKLGVKVII</sequence>
<dbReference type="EC" id="2.7.7.7"/>
<dbReference type="EMBL" id="AE000657">
    <property type="protein sequence ID" value="AAC07087.1"/>
    <property type="molecule type" value="Genomic_DNA"/>
</dbReference>
<dbReference type="PIR" id="B70387">
    <property type="entry name" value="B70387"/>
</dbReference>
<dbReference type="RefSeq" id="NP_213688.1">
    <property type="nucleotide sequence ID" value="NC_000918.1"/>
</dbReference>
<dbReference type="RefSeq" id="WP_010880626.1">
    <property type="nucleotide sequence ID" value="NC_000918.1"/>
</dbReference>
<dbReference type="SMR" id="O67125"/>
<dbReference type="FunCoup" id="O67125">
    <property type="interactions" value="308"/>
</dbReference>
<dbReference type="STRING" id="224324.aq_1008"/>
<dbReference type="EnsemblBacteria" id="AAC07087">
    <property type="protein sequence ID" value="AAC07087"/>
    <property type="gene ID" value="aq_1008"/>
</dbReference>
<dbReference type="KEGG" id="aae:aq_1008"/>
<dbReference type="PATRIC" id="fig|224324.8.peg.788"/>
<dbReference type="eggNOG" id="COG0587">
    <property type="taxonomic scope" value="Bacteria"/>
</dbReference>
<dbReference type="HOGENOM" id="CLU_001600_0_0_0"/>
<dbReference type="InParanoid" id="O67125"/>
<dbReference type="OrthoDB" id="9803237at2"/>
<dbReference type="Proteomes" id="UP000000798">
    <property type="component" value="Chromosome"/>
</dbReference>
<dbReference type="GO" id="GO:0005737">
    <property type="term" value="C:cytoplasm"/>
    <property type="evidence" value="ECO:0007669"/>
    <property type="project" value="UniProtKB-SubCell"/>
</dbReference>
<dbReference type="GO" id="GO:0008408">
    <property type="term" value="F:3'-5' exonuclease activity"/>
    <property type="evidence" value="ECO:0007669"/>
    <property type="project" value="InterPro"/>
</dbReference>
<dbReference type="GO" id="GO:0003887">
    <property type="term" value="F:DNA-directed DNA polymerase activity"/>
    <property type="evidence" value="ECO:0000318"/>
    <property type="project" value="GO_Central"/>
</dbReference>
<dbReference type="GO" id="GO:0003676">
    <property type="term" value="F:nucleic acid binding"/>
    <property type="evidence" value="ECO:0007669"/>
    <property type="project" value="InterPro"/>
</dbReference>
<dbReference type="GO" id="GO:0006260">
    <property type="term" value="P:DNA replication"/>
    <property type="evidence" value="ECO:0007669"/>
    <property type="project" value="UniProtKB-KW"/>
</dbReference>
<dbReference type="CDD" id="cd04485">
    <property type="entry name" value="DnaE_OBF"/>
    <property type="match status" value="1"/>
</dbReference>
<dbReference type="CDD" id="cd12113">
    <property type="entry name" value="PHP_PolIIIA_DnaE3"/>
    <property type="match status" value="1"/>
</dbReference>
<dbReference type="Gene3D" id="1.10.150.870">
    <property type="match status" value="1"/>
</dbReference>
<dbReference type="Gene3D" id="1.10.10.1600">
    <property type="entry name" value="Bacterial DNA polymerase III alpha subunit, thumb domain"/>
    <property type="match status" value="1"/>
</dbReference>
<dbReference type="Gene3D" id="3.20.20.140">
    <property type="entry name" value="Metal-dependent hydrolases"/>
    <property type="match status" value="1"/>
</dbReference>
<dbReference type="Gene3D" id="2.40.50.140">
    <property type="entry name" value="Nucleic acid-binding proteins"/>
    <property type="match status" value="1"/>
</dbReference>
<dbReference type="InterPro" id="IPR011708">
    <property type="entry name" value="DNA_pol3_alpha_NTPase_dom"/>
</dbReference>
<dbReference type="InterPro" id="IPR041931">
    <property type="entry name" value="DNA_pol3_alpha_thumb_dom"/>
</dbReference>
<dbReference type="InterPro" id="IPR040982">
    <property type="entry name" value="DNA_pol3_finger"/>
</dbReference>
<dbReference type="InterPro" id="IPR004805">
    <property type="entry name" value="DnaE2/DnaE/PolC"/>
</dbReference>
<dbReference type="InterPro" id="IPR029460">
    <property type="entry name" value="DNAPol_HHH"/>
</dbReference>
<dbReference type="InterPro" id="IPR012340">
    <property type="entry name" value="NA-bd_OB-fold"/>
</dbReference>
<dbReference type="InterPro" id="IPR004365">
    <property type="entry name" value="NA-bd_OB_tRNA"/>
</dbReference>
<dbReference type="InterPro" id="IPR004013">
    <property type="entry name" value="PHP_dom"/>
</dbReference>
<dbReference type="InterPro" id="IPR003141">
    <property type="entry name" value="Pol/His_phosphatase_N"/>
</dbReference>
<dbReference type="InterPro" id="IPR016195">
    <property type="entry name" value="Pol/histidinol_Pase-like"/>
</dbReference>
<dbReference type="NCBIfam" id="TIGR00594">
    <property type="entry name" value="polc"/>
    <property type="match status" value="1"/>
</dbReference>
<dbReference type="NCBIfam" id="NF004226">
    <property type="entry name" value="PRK05673.1"/>
    <property type="match status" value="1"/>
</dbReference>
<dbReference type="PANTHER" id="PTHR32294">
    <property type="entry name" value="DNA POLYMERASE III SUBUNIT ALPHA"/>
    <property type="match status" value="1"/>
</dbReference>
<dbReference type="PANTHER" id="PTHR32294:SF0">
    <property type="entry name" value="DNA POLYMERASE III SUBUNIT ALPHA"/>
    <property type="match status" value="1"/>
</dbReference>
<dbReference type="Pfam" id="PF07733">
    <property type="entry name" value="DNA_pol3_alpha"/>
    <property type="match status" value="1"/>
</dbReference>
<dbReference type="Pfam" id="PF17657">
    <property type="entry name" value="DNA_pol3_finger"/>
    <property type="match status" value="1"/>
</dbReference>
<dbReference type="Pfam" id="PF14579">
    <property type="entry name" value="HHH_6"/>
    <property type="match status" value="1"/>
</dbReference>
<dbReference type="Pfam" id="PF02811">
    <property type="entry name" value="PHP"/>
    <property type="match status" value="1"/>
</dbReference>
<dbReference type="Pfam" id="PF01336">
    <property type="entry name" value="tRNA_anti-codon"/>
    <property type="match status" value="1"/>
</dbReference>
<dbReference type="SMART" id="SM00481">
    <property type="entry name" value="POLIIIAc"/>
    <property type="match status" value="1"/>
</dbReference>
<dbReference type="SUPFAM" id="SSF50249">
    <property type="entry name" value="Nucleic acid-binding proteins"/>
    <property type="match status" value="1"/>
</dbReference>
<dbReference type="SUPFAM" id="SSF89550">
    <property type="entry name" value="PHP domain-like"/>
    <property type="match status" value="1"/>
</dbReference>